<proteinExistence type="inferred from homology"/>
<gene>
    <name evidence="1" type="primary">atpB1</name>
    <name type="ordered locus">CT1029</name>
</gene>
<accession>Q8KDL8</accession>
<protein>
    <recommendedName>
        <fullName evidence="1">ATP synthase subunit a 1</fullName>
    </recommendedName>
    <alternativeName>
        <fullName evidence="1">ATP synthase F0 sector subunit a 1</fullName>
    </alternativeName>
    <alternativeName>
        <fullName evidence="1">F-ATPase subunit 6 1</fullName>
    </alternativeName>
</protein>
<feature type="chain" id="PRO_0000362272" description="ATP synthase subunit a 1">
    <location>
        <begin position="1"/>
        <end position="221"/>
    </location>
</feature>
<feature type="transmembrane region" description="Helical" evidence="1">
    <location>
        <begin position="20"/>
        <end position="40"/>
    </location>
</feature>
<feature type="transmembrane region" description="Helical" evidence="1">
    <location>
        <begin position="78"/>
        <end position="98"/>
    </location>
</feature>
<feature type="transmembrane region" description="Helical" evidence="1">
    <location>
        <begin position="108"/>
        <end position="128"/>
    </location>
</feature>
<feature type="transmembrane region" description="Helical" evidence="1">
    <location>
        <begin position="174"/>
        <end position="194"/>
    </location>
</feature>
<feature type="transmembrane region" description="Helical" evidence="1">
    <location>
        <begin position="196"/>
        <end position="216"/>
    </location>
</feature>
<keyword id="KW-0066">ATP synthesis</keyword>
<keyword id="KW-0997">Cell inner membrane</keyword>
<keyword id="KW-1003">Cell membrane</keyword>
<keyword id="KW-0138">CF(0)</keyword>
<keyword id="KW-0375">Hydrogen ion transport</keyword>
<keyword id="KW-0406">Ion transport</keyword>
<keyword id="KW-0472">Membrane</keyword>
<keyword id="KW-1185">Reference proteome</keyword>
<keyword id="KW-0812">Transmembrane</keyword>
<keyword id="KW-1133">Transmembrane helix</keyword>
<keyword id="KW-0813">Transport</keyword>
<reference key="1">
    <citation type="journal article" date="2002" name="Proc. Natl. Acad. Sci. U.S.A.">
        <title>The complete genome sequence of Chlorobium tepidum TLS, a photosynthetic, anaerobic, green-sulfur bacterium.</title>
        <authorList>
            <person name="Eisen J.A."/>
            <person name="Nelson K.E."/>
            <person name="Paulsen I.T."/>
            <person name="Heidelberg J.F."/>
            <person name="Wu M."/>
            <person name="Dodson R.J."/>
            <person name="DeBoy R.T."/>
            <person name="Gwinn M.L."/>
            <person name="Nelson W.C."/>
            <person name="Haft D.H."/>
            <person name="Hickey E.K."/>
            <person name="Peterson J.D."/>
            <person name="Durkin A.S."/>
            <person name="Kolonay J.F."/>
            <person name="Yang F."/>
            <person name="Holt I.E."/>
            <person name="Umayam L.A."/>
            <person name="Mason T.M."/>
            <person name="Brenner M."/>
            <person name="Shea T.P."/>
            <person name="Parksey D.S."/>
            <person name="Nierman W.C."/>
            <person name="Feldblyum T.V."/>
            <person name="Hansen C.L."/>
            <person name="Craven M.B."/>
            <person name="Radune D."/>
            <person name="Vamathevan J.J."/>
            <person name="Khouri H.M."/>
            <person name="White O."/>
            <person name="Gruber T.M."/>
            <person name="Ketchum K.A."/>
            <person name="Venter J.C."/>
            <person name="Tettelin H."/>
            <person name="Bryant D.A."/>
            <person name="Fraser C.M."/>
        </authorList>
    </citation>
    <scope>NUCLEOTIDE SEQUENCE [LARGE SCALE GENOMIC DNA]</scope>
    <source>
        <strain>ATCC 49652 / DSM 12025 / NBRC 103806 / TLS</strain>
    </source>
</reference>
<evidence type="ECO:0000255" key="1">
    <source>
        <dbReference type="HAMAP-Rule" id="MF_01393"/>
    </source>
</evidence>
<dbReference type="EMBL" id="AE006470">
    <property type="protein sequence ID" value="AAM72262.1"/>
    <property type="molecule type" value="Genomic_DNA"/>
</dbReference>
<dbReference type="RefSeq" id="NP_661920.1">
    <property type="nucleotide sequence ID" value="NC_002932.3"/>
</dbReference>
<dbReference type="RefSeq" id="WP_010932707.1">
    <property type="nucleotide sequence ID" value="NC_002932.3"/>
</dbReference>
<dbReference type="SMR" id="Q8KDL8"/>
<dbReference type="STRING" id="194439.CT1029"/>
<dbReference type="EnsemblBacteria" id="AAM72262">
    <property type="protein sequence ID" value="AAM72262"/>
    <property type="gene ID" value="CT1029"/>
</dbReference>
<dbReference type="KEGG" id="cte:CT1029"/>
<dbReference type="PATRIC" id="fig|194439.7.peg.937"/>
<dbReference type="eggNOG" id="COG0356">
    <property type="taxonomic scope" value="Bacteria"/>
</dbReference>
<dbReference type="HOGENOM" id="CLU_041018_2_5_10"/>
<dbReference type="OrthoDB" id="9789241at2"/>
<dbReference type="Proteomes" id="UP000001007">
    <property type="component" value="Chromosome"/>
</dbReference>
<dbReference type="GO" id="GO:0005886">
    <property type="term" value="C:plasma membrane"/>
    <property type="evidence" value="ECO:0007669"/>
    <property type="project" value="UniProtKB-SubCell"/>
</dbReference>
<dbReference type="GO" id="GO:0045259">
    <property type="term" value="C:proton-transporting ATP synthase complex"/>
    <property type="evidence" value="ECO:0007669"/>
    <property type="project" value="UniProtKB-KW"/>
</dbReference>
<dbReference type="GO" id="GO:0046933">
    <property type="term" value="F:proton-transporting ATP synthase activity, rotational mechanism"/>
    <property type="evidence" value="ECO:0007669"/>
    <property type="project" value="UniProtKB-UniRule"/>
</dbReference>
<dbReference type="GO" id="GO:0042777">
    <property type="term" value="P:proton motive force-driven plasma membrane ATP synthesis"/>
    <property type="evidence" value="ECO:0007669"/>
    <property type="project" value="TreeGrafter"/>
</dbReference>
<dbReference type="CDD" id="cd00310">
    <property type="entry name" value="ATP-synt_Fo_a_6"/>
    <property type="match status" value="1"/>
</dbReference>
<dbReference type="Gene3D" id="1.20.120.220">
    <property type="entry name" value="ATP synthase, F0 complex, subunit A"/>
    <property type="match status" value="1"/>
</dbReference>
<dbReference type="HAMAP" id="MF_01393">
    <property type="entry name" value="ATP_synth_a_bact"/>
    <property type="match status" value="1"/>
</dbReference>
<dbReference type="InterPro" id="IPR017692">
    <property type="entry name" value="Alt_ATP_synth_F0_Asu"/>
</dbReference>
<dbReference type="InterPro" id="IPR045082">
    <property type="entry name" value="ATP_syn_F0_a_bact/chloroplast"/>
</dbReference>
<dbReference type="InterPro" id="IPR000568">
    <property type="entry name" value="ATP_synth_F0_asu"/>
</dbReference>
<dbReference type="InterPro" id="IPR023011">
    <property type="entry name" value="ATP_synth_F0_asu_AS"/>
</dbReference>
<dbReference type="InterPro" id="IPR035908">
    <property type="entry name" value="F0_ATP_A_sf"/>
</dbReference>
<dbReference type="NCBIfam" id="TIGR03306">
    <property type="entry name" value="altF1_A"/>
    <property type="match status" value="1"/>
</dbReference>
<dbReference type="NCBIfam" id="TIGR01131">
    <property type="entry name" value="ATP_synt_6_or_A"/>
    <property type="match status" value="1"/>
</dbReference>
<dbReference type="NCBIfam" id="NF004481">
    <property type="entry name" value="PRK05815.2-3"/>
    <property type="match status" value="1"/>
</dbReference>
<dbReference type="PANTHER" id="PTHR42823">
    <property type="entry name" value="ATP SYNTHASE SUBUNIT A, CHLOROPLASTIC"/>
    <property type="match status" value="1"/>
</dbReference>
<dbReference type="PANTHER" id="PTHR42823:SF3">
    <property type="entry name" value="ATP SYNTHASE SUBUNIT A, CHLOROPLASTIC"/>
    <property type="match status" value="1"/>
</dbReference>
<dbReference type="Pfam" id="PF00119">
    <property type="entry name" value="ATP-synt_A"/>
    <property type="match status" value="1"/>
</dbReference>
<dbReference type="PRINTS" id="PR00123">
    <property type="entry name" value="ATPASEA"/>
</dbReference>
<dbReference type="SUPFAM" id="SSF81336">
    <property type="entry name" value="F1F0 ATP synthase subunit A"/>
    <property type="match status" value="1"/>
</dbReference>
<dbReference type="PROSITE" id="PS00449">
    <property type="entry name" value="ATPASE_A"/>
    <property type="match status" value="1"/>
</dbReference>
<organism>
    <name type="scientific">Chlorobaculum tepidum (strain ATCC 49652 / DSM 12025 / NBRC 103806 / TLS)</name>
    <name type="common">Chlorobium tepidum</name>
    <dbReference type="NCBI Taxonomy" id="194439"/>
    <lineage>
        <taxon>Bacteria</taxon>
        <taxon>Pseudomonadati</taxon>
        <taxon>Chlorobiota</taxon>
        <taxon>Chlorobiia</taxon>
        <taxon>Chlorobiales</taxon>
        <taxon>Chlorobiaceae</taxon>
        <taxon>Chlorobaculum</taxon>
    </lineage>
</organism>
<name>ATP61_CHLTE</name>
<sequence>MHLSSDEVILWQSGFLKLNLTIVTTWALMLLLAGGSALITRRLSTGITISRWQSMLEIIVTMAHRQISEVGLQKPEKYLPFIAALFLFIATANLCTVIPGYEPPTGSLSTTAALALSVFIAVPLFGIAESSLVGYLKTYAEPTPIMLPFNIVGELTRTMALAVRLFGNMMSGDMILVILLTISPLVFPVLMNILGLLTGMVQAYIFSILATVYIAAATRTR</sequence>
<comment type="function">
    <text evidence="1">Key component of the proton channel; it plays a direct role in the translocation of protons across the membrane.</text>
</comment>
<comment type="subunit">
    <text evidence="1">F-type ATPases have 2 components, CF(1) - the catalytic core - and CF(0) - the membrane proton channel. CF(1) has five subunits: alpha(3), beta(3), gamma(1), delta(1), epsilon(1). CF(0) has four main subunits: a, b, b' and c.</text>
</comment>
<comment type="subcellular location">
    <subcellularLocation>
        <location evidence="1">Cell inner membrane</location>
        <topology evidence="1">Multi-pass membrane protein</topology>
    </subcellularLocation>
</comment>
<comment type="similarity">
    <text evidence="1">Belongs to the ATPase A chain family.</text>
</comment>